<reference key="1">
    <citation type="journal article" date="1994" name="J. Biol. Chem.">
        <title>Cloning and characterization of the essential Saccharomyces cerevisiae RFC4 gene encoding the 37-kDa subunit of replication factor C.</title>
        <authorList>
            <person name="Li X."/>
            <person name="Burgers P.M.J."/>
        </authorList>
    </citation>
    <scope>NUCLEOTIDE SEQUENCE [GENOMIC DNA]</scope>
    <source>
        <strain>ATCC 200060 / W303</strain>
    </source>
</reference>
<reference key="2">
    <citation type="journal article" date="1995" name="Mol. Cell. Biol.">
        <title>Characterization of the five replication factor C genes of Saccharomyces cerevisiae.</title>
        <authorList>
            <person name="Cullmann G."/>
            <person name="Fien K."/>
            <person name="Kobayashi R."/>
            <person name="Stillman B."/>
        </authorList>
    </citation>
    <scope>NUCLEOTIDE SEQUENCE [GENOMIC DNA]</scope>
    <scope>IDENTIFICATION IN THE RFC COMPLEX</scope>
    <source>
        <strain>ATCC 204508 / S288c</strain>
    </source>
</reference>
<reference key="3">
    <citation type="journal article" date="1995" name="Yeast">
        <title>A 29.425 kb segment on the left arm of yeast chromosome XV contains more than twice as many unknown as known open reading frames.</title>
        <authorList>
            <person name="Zumstein E."/>
            <person name="Pearson B.M."/>
            <person name="Kalogeropoulos A."/>
            <person name="Schweizer M."/>
        </authorList>
    </citation>
    <scope>NUCLEOTIDE SEQUENCE [GENOMIC DNA]</scope>
    <source>
        <strain>ATCC 96604 / S288c / FY1679</strain>
    </source>
</reference>
<reference key="4">
    <citation type="journal article" date="1997" name="Nature">
        <title>The nucleotide sequence of Saccharomyces cerevisiae chromosome XV.</title>
        <authorList>
            <person name="Dujon B."/>
            <person name="Albermann K."/>
            <person name="Aldea M."/>
            <person name="Alexandraki D."/>
            <person name="Ansorge W."/>
            <person name="Arino J."/>
            <person name="Benes V."/>
            <person name="Bohn C."/>
            <person name="Bolotin-Fukuhara M."/>
            <person name="Bordonne R."/>
            <person name="Boyer J."/>
            <person name="Camasses A."/>
            <person name="Casamayor A."/>
            <person name="Casas C."/>
            <person name="Cheret G."/>
            <person name="Cziepluch C."/>
            <person name="Daignan-Fornier B."/>
            <person name="Dang V.-D."/>
            <person name="de Haan M."/>
            <person name="Delius H."/>
            <person name="Durand P."/>
            <person name="Fairhead C."/>
            <person name="Feldmann H."/>
            <person name="Gaillon L."/>
            <person name="Galisson F."/>
            <person name="Gamo F.-J."/>
            <person name="Gancedo C."/>
            <person name="Goffeau A."/>
            <person name="Goulding S.E."/>
            <person name="Grivell L.A."/>
            <person name="Habbig B."/>
            <person name="Hand N.J."/>
            <person name="Hani J."/>
            <person name="Hattenhorst U."/>
            <person name="Hebling U."/>
            <person name="Hernando Y."/>
            <person name="Herrero E."/>
            <person name="Heumann K."/>
            <person name="Hiesel R."/>
            <person name="Hilger F."/>
            <person name="Hofmann B."/>
            <person name="Hollenberg C.P."/>
            <person name="Hughes B."/>
            <person name="Jauniaux J.-C."/>
            <person name="Kalogeropoulos A."/>
            <person name="Katsoulou C."/>
            <person name="Kordes E."/>
            <person name="Lafuente M.J."/>
            <person name="Landt O."/>
            <person name="Louis E.J."/>
            <person name="Maarse A.C."/>
            <person name="Madania A."/>
            <person name="Mannhaupt G."/>
            <person name="Marck C."/>
            <person name="Martin R.P."/>
            <person name="Mewes H.-W."/>
            <person name="Michaux G."/>
            <person name="Paces V."/>
            <person name="Parle-McDermott A.G."/>
            <person name="Pearson B.M."/>
            <person name="Perrin A."/>
            <person name="Pettersson B."/>
            <person name="Poch O."/>
            <person name="Pohl T.M."/>
            <person name="Poirey R."/>
            <person name="Portetelle D."/>
            <person name="Pujol A."/>
            <person name="Purnelle B."/>
            <person name="Ramezani Rad M."/>
            <person name="Rechmann S."/>
            <person name="Schwager C."/>
            <person name="Schweizer M."/>
            <person name="Sor F."/>
            <person name="Sterky F."/>
            <person name="Tarassov I.A."/>
            <person name="Teodoru C."/>
            <person name="Tettelin H."/>
            <person name="Thierry A."/>
            <person name="Tobiasch E."/>
            <person name="Tzermia M."/>
            <person name="Uhlen M."/>
            <person name="Unseld M."/>
            <person name="Valens M."/>
            <person name="Vandenbol M."/>
            <person name="Vetter I."/>
            <person name="Vlcek C."/>
            <person name="Voet M."/>
            <person name="Volckaert G."/>
            <person name="Voss H."/>
            <person name="Wambutt R."/>
            <person name="Wedler H."/>
            <person name="Wiemann S."/>
            <person name="Winsor B."/>
            <person name="Wolfe K.H."/>
            <person name="Zollner A."/>
            <person name="Zumstein E."/>
            <person name="Kleine K."/>
        </authorList>
    </citation>
    <scope>NUCLEOTIDE SEQUENCE [LARGE SCALE GENOMIC DNA]</scope>
    <source>
        <strain>ATCC 204508 / S288c</strain>
    </source>
</reference>
<reference key="5">
    <citation type="journal article" date="2014" name="G3 (Bethesda)">
        <title>The reference genome sequence of Saccharomyces cerevisiae: Then and now.</title>
        <authorList>
            <person name="Engel S.R."/>
            <person name="Dietrich F.S."/>
            <person name="Fisk D.G."/>
            <person name="Binkley G."/>
            <person name="Balakrishnan R."/>
            <person name="Costanzo M.C."/>
            <person name="Dwight S.S."/>
            <person name="Hitz B.C."/>
            <person name="Karra K."/>
            <person name="Nash R.S."/>
            <person name="Weng S."/>
            <person name="Wong E.D."/>
            <person name="Lloyd P."/>
            <person name="Skrzypek M.S."/>
            <person name="Miyasato S.R."/>
            <person name="Simison M."/>
            <person name="Cherry J.M."/>
        </authorList>
    </citation>
    <scope>GENOME REANNOTATION</scope>
    <source>
        <strain>ATCC 204508 / S288c</strain>
    </source>
</reference>
<reference key="6">
    <citation type="journal article" date="2001" name="Mol. Cell">
        <title>Identification of RFC(Ctf18p, Ctf8p, Dcc1p): an alternative RFC complex required for sister chromatid cohesion in S. cerevisiae.</title>
        <authorList>
            <person name="Mayer M.L."/>
            <person name="Gygi S.P."/>
            <person name="Aebersold R."/>
            <person name="Hieter P."/>
        </authorList>
    </citation>
    <scope>IDENTIFICATION IN THE CTF18-RFC COMPLEX</scope>
</reference>
<reference key="7">
    <citation type="journal article" date="2001" name="Mol. Cell. Biol.">
        <title>Chl12 (Ctf18) forms a novel replication factor C-related complex and functions redundantly with Rad24 in the DNA replication checkpoint pathway.</title>
        <authorList>
            <person name="Naiki T."/>
            <person name="Kondo T."/>
            <person name="Nakada D."/>
            <person name="Matsumoto K."/>
            <person name="Sugimoto K."/>
        </authorList>
    </citation>
    <scope>FUNCTION</scope>
    <scope>INTERACTION WITH CTF18</scope>
</reference>
<reference key="8">
    <citation type="journal article" date="2003" name="EMBO J.">
        <title>Elg1 forms an alternative RFC complex important for DNA replication and genome integrity.</title>
        <authorList>
            <person name="Bellaoui M."/>
            <person name="Chang M."/>
            <person name="Ou J."/>
            <person name="Xu H."/>
            <person name="Boone C."/>
            <person name="Brown G.W."/>
        </authorList>
    </citation>
    <scope>INTERACTION WITH ELG1</scope>
</reference>
<reference key="9">
    <citation type="journal article" date="2003" name="Mol. Cell. Biol.">
        <title>Mechanical link between cohesion establishment and DNA replication: Ctf7p/Eco1p, a cohesion establishment factor, associates with three different replication factor C complexes.</title>
        <authorList>
            <person name="Kenna M.A."/>
            <person name="Skibbens R.V."/>
        </authorList>
    </citation>
    <scope>INTERACTION WITH ECO1</scope>
</reference>
<reference key="10">
    <citation type="journal article" date="2003" name="Nature">
        <title>Global analysis of protein expression in yeast.</title>
        <authorList>
            <person name="Ghaemmaghami S."/>
            <person name="Huh W.-K."/>
            <person name="Bower K."/>
            <person name="Howson R.W."/>
            <person name="Belle A."/>
            <person name="Dephoure N."/>
            <person name="O'Shea E.K."/>
            <person name="Weissman J.S."/>
        </authorList>
    </citation>
    <scope>LEVEL OF PROTEIN EXPRESSION [LARGE SCALE ANALYSIS]</scope>
</reference>
<reference key="11">
    <citation type="journal article" date="2003" name="Proc. Natl. Acad. Sci. U.S.A.">
        <title>Yeast Rad17/Mec3/Ddc1: a sliding clamp for the DNA damage checkpoint.</title>
        <authorList>
            <person name="Majka J."/>
            <person name="Burgers P.M.J."/>
        </authorList>
    </citation>
    <scope>IDENTIFICATION IN THE RAD24-RFC COMPLEX</scope>
    <scope>FUNCTION OF THE RAD24-RFC COMPLEX</scope>
</reference>
<reference key="12">
    <citation type="journal article" date="2005" name="Mol. Cell. Biol.">
        <title>Replication protein A-directed unloading of PCNA by the Ctf18 cohesion establishment complex.</title>
        <authorList>
            <person name="Bylund G.O."/>
            <person name="Burgers P.M."/>
        </authorList>
    </citation>
    <scope>IDENTIFICATION IN THE RFC COMPLEX</scope>
    <scope>IDENTIFICATION IN THE RAD24-RFC COMPLEX</scope>
    <scope>IDENTIFICATION IN THE ELG1-RFC COMPLEX</scope>
    <scope>IDENTIFICATION IN THE CTF18-RFC COMPLEX</scope>
    <scope>FUNCTION OF THE CTF18-RFC COMPLEX</scope>
</reference>
<reference key="13">
    <citation type="journal article" date="2004" name="Nature">
        <title>Structural analysis of a eukaryotic sliding DNA clamp-clamp loader complex.</title>
        <authorList>
            <person name="Bowman G.D."/>
            <person name="O'Donnell M."/>
            <person name="Kuriyan J."/>
        </authorList>
    </citation>
    <scope>X-RAY CRYSTALLOGRAPHY (2.85 ANGSTROMS) IN COMPLEX WITH AN ATP ANALOG; RCF1; RCF2; RCF3; RCF5 AND PCNA</scope>
</reference>
<organism>
    <name type="scientific">Saccharomyces cerevisiae (strain ATCC 204508 / S288c)</name>
    <name type="common">Baker's yeast</name>
    <dbReference type="NCBI Taxonomy" id="559292"/>
    <lineage>
        <taxon>Eukaryota</taxon>
        <taxon>Fungi</taxon>
        <taxon>Dikarya</taxon>
        <taxon>Ascomycota</taxon>
        <taxon>Saccharomycotina</taxon>
        <taxon>Saccharomycetes</taxon>
        <taxon>Saccharomycetales</taxon>
        <taxon>Saccharomycetaceae</taxon>
        <taxon>Saccharomyces</taxon>
    </lineage>
</organism>
<keyword id="KW-0002">3D-structure</keyword>
<keyword id="KW-0067">ATP-binding</keyword>
<keyword id="KW-0131">Cell cycle</keyword>
<keyword id="KW-0235">DNA replication</keyword>
<keyword id="KW-0238">DNA-binding</keyword>
<keyword id="KW-0547">Nucleotide-binding</keyword>
<keyword id="KW-0539">Nucleus</keyword>
<keyword id="KW-1185">Reference proteome</keyword>
<proteinExistence type="evidence at protein level"/>
<sequence length="323" mass="36149">MSKTLSLQLPWVEKYRPQVLSDIVGNKETIDRLQQIAKDGNMPHMIISGMPGIGKTTSVHCLAHELLGRSYADGVLELNASDDRGIDVVRNQIKHFAQKKLHLPPGKHKIVILDEADSMTAGAQQALRRTMELYSNSTRFAFACNQSNKIIEPLQSRCAILRYSKLSDEDVLKRLLQIIKLEDVKYTNDGLEAIIFTAEGDMRQAINNLQSTVAGHGLVNADNVFKIVDSPHPLIVKKMLLASNLEDSIQILRTDLWKKGYSSIDIVTTSFRVTKNLAQVKESVRLEMIKEIGLTHMRILEGVGTYLQLASMLAKIHKLNNKA</sequence>
<protein>
    <recommendedName>
        <fullName>Replication factor C subunit 4</fullName>
        <shortName>Replication factor C4</shortName>
    </recommendedName>
    <alternativeName>
        <fullName>Activator 1 37 kDa subunit</fullName>
    </alternativeName>
</protein>
<evidence type="ECO:0000269" key="1">
    <source>
    </source>
</evidence>
<evidence type="ECO:0000269" key="2">
    <source>
    </source>
</evidence>
<evidence type="ECO:0000269" key="3">
    <source>
    </source>
</evidence>
<evidence type="ECO:0000269" key="4">
    <source>
    </source>
</evidence>
<evidence type="ECO:0000269" key="5">
    <source>
    </source>
</evidence>
<evidence type="ECO:0000269" key="6">
    <source>
    </source>
</evidence>
<evidence type="ECO:0000269" key="7">
    <source>
    </source>
</evidence>
<evidence type="ECO:0000269" key="8">
    <source>
    </source>
</evidence>
<evidence type="ECO:0000269" key="9">
    <source>
    </source>
</evidence>
<evidence type="ECO:0000305" key="10"/>
<evidence type="ECO:0007829" key="11">
    <source>
        <dbReference type="PDB" id="7U1P"/>
    </source>
</evidence>
<evidence type="ECO:0007829" key="12">
    <source>
        <dbReference type="PDB" id="8DQW"/>
    </source>
</evidence>
<evidence type="ECO:0007829" key="13">
    <source>
        <dbReference type="PDB" id="8DQX"/>
    </source>
</evidence>
<evidence type="ECO:0007829" key="14">
    <source>
        <dbReference type="PDB" id="8DR1"/>
    </source>
</evidence>
<gene>
    <name type="primary">RFC4</name>
    <name type="ordered locus">YOL094C</name>
    <name type="ORF">O0923</name>
</gene>
<comment type="function">
    <text evidence="2 3 8">Component of ATP-dependent clamp loader (RFC and RFC-like) complexes for DNA clamps, such as the POL30/PCNA homotrimer and the checkpoint clamp DDC1:MEC3:RAD17 complex. During a clamp loading circle, the RFC:clamp complex binds to DNA and the recognition of the double-stranded/single-stranded junction stimulates ATP hydrolysis by RFC. The complex presumably provides bipartite ATP sites in which one subunit supplies a catalytic site for hydrolysis of ATP bound to the neighboring subunit. Dissociation of RFC from the clamp leaves the clamp encircling DNA. Component of the replication factor C (RFC or activator 1) complex which loads POL30/PCNA and acts during elongation of primed DNA templates by DNA polymerase delta and epsilon. RFC has an essential but redundant activity in sister chromatid cohesion establishment. Component of the RFC-like complex CTF18-RFC which is required for efficient establishment of chromosome cohesion during S-phase and may load or unload POL30/PCNA. Component of the RFC-like RAD24-RFC complex which loads the checkpoint clamp DDC1:MEC3:RAD17 complex and is involved in DNA repair pathways. Component of the RFC-like ELG1-RFC complex which appears to have a role in DNA replication, replication fork re-start, recombination and repair.</text>
</comment>
<comment type="subunit">
    <text evidence="1 2 3 4 5 7 8 9">Replication factor C (RFC) is a heteropentamer of subunits RFC1, RFC2, RFC3, RFC4 and RFC5 and forms a complex with POL30/PCNA in the presence of ATP. Component of the RAD24-RFC complex which consists of RAD14, RFC2, RFC3, RFC4 and RFC5 and associates with the checkpoint clamp DDC1:MEC3:RAD17 complex. Component of the ELG1-RFC complex which consists of ELG1, RFC2, RFC3, RFC4 and RFC5. Component of the CTF18-RFC complex, which consists of CTF18, CTF8, DCC1, RFC2, RFC3, RFC4 and RFC5. RFC4 interacts with ECO1.</text>
</comment>
<comment type="interaction">
    <interactant intactId="EBI-15009">
        <id>P40339</id>
    </interactant>
    <interactant intactId="EBI-4560">
        <id>P49956</id>
        <label>CTF18</label>
    </interactant>
    <organismsDiffer>false</organismsDiffer>
    <experiments>6</experiments>
</comment>
<comment type="interaction">
    <interactant intactId="EBI-15009">
        <id>P40339</id>
    </interactant>
    <interactant intactId="EBI-5216">
        <id>P38877</id>
        <label>CTF8</label>
    </interactant>
    <organismsDiffer>false</organismsDiffer>
    <experiments>3</experiments>
</comment>
<comment type="interaction">
    <interactant intactId="EBI-15009">
        <id>P40339</id>
    </interactant>
    <interactant intactId="EBI-32195">
        <id>Q12050</id>
        <label>ELG1</label>
    </interactant>
    <organismsDiffer>false</organismsDiffer>
    <experiments>6</experiments>
</comment>
<comment type="interaction">
    <interactant intactId="EBI-15009">
        <id>P40339</id>
    </interactant>
    <interactant intactId="EBI-14675">
        <id>P32641</id>
        <label>RAD24</label>
    </interactant>
    <organismsDiffer>false</organismsDiffer>
    <experiments>3</experiments>
</comment>
<comment type="subcellular location">
    <subcellularLocation>
        <location evidence="10">Nucleus</location>
    </subcellularLocation>
</comment>
<comment type="miscellaneous">
    <text evidence="6">Present with 2760 molecules/cell in log phase SD medium.</text>
</comment>
<comment type="similarity">
    <text evidence="10">Belongs to the activator 1 small subunits family.</text>
</comment>
<name>RFC4_YEAST</name>
<feature type="chain" id="PRO_0000121771" description="Replication factor C subunit 4">
    <location>
        <begin position="1"/>
        <end position="323"/>
    </location>
</feature>
<feature type="binding site">
    <location>
        <position position="12"/>
    </location>
    <ligand>
        <name>ATP</name>
        <dbReference type="ChEBI" id="CHEBI:30616"/>
    </ligand>
</feature>
<feature type="binding site">
    <location>
        <position position="24"/>
    </location>
    <ligand>
        <name>ATP</name>
        <dbReference type="ChEBI" id="CHEBI:30616"/>
    </ligand>
</feature>
<feature type="binding site">
    <location>
        <begin position="49"/>
        <end position="57"/>
    </location>
    <ligand>
        <name>ATP</name>
        <dbReference type="ChEBI" id="CHEBI:30616"/>
    </ligand>
</feature>
<feature type="binding site">
    <location>
        <position position="145"/>
    </location>
    <ligand>
        <name>ATP</name>
        <dbReference type="ChEBI" id="CHEBI:30616"/>
    </ligand>
</feature>
<feature type="binding site">
    <location>
        <position position="203"/>
    </location>
    <ligand>
        <name>ATP</name>
        <dbReference type="ChEBI" id="CHEBI:30616"/>
    </ligand>
</feature>
<feature type="helix" evidence="12">
    <location>
        <begin position="11"/>
        <end position="14"/>
    </location>
</feature>
<feature type="helix" evidence="12">
    <location>
        <begin position="20"/>
        <end position="22"/>
    </location>
</feature>
<feature type="helix" evidence="12">
    <location>
        <begin position="27"/>
        <end position="39"/>
    </location>
</feature>
<feature type="strand" evidence="12">
    <location>
        <begin position="45"/>
        <end position="48"/>
    </location>
</feature>
<feature type="strand" evidence="14">
    <location>
        <begin position="51"/>
        <end position="54"/>
    </location>
</feature>
<feature type="helix" evidence="12">
    <location>
        <begin position="55"/>
        <end position="67"/>
    </location>
</feature>
<feature type="helix" evidence="12">
    <location>
        <begin position="68"/>
        <end position="70"/>
    </location>
</feature>
<feature type="helix" evidence="12">
    <location>
        <begin position="71"/>
        <end position="74"/>
    </location>
</feature>
<feature type="strand" evidence="12">
    <location>
        <begin position="75"/>
        <end position="78"/>
    </location>
</feature>
<feature type="turn" evidence="11">
    <location>
        <begin position="80"/>
        <end position="82"/>
    </location>
</feature>
<feature type="helix" evidence="12">
    <location>
        <begin position="86"/>
        <end position="98"/>
    </location>
</feature>
<feature type="strand" evidence="12">
    <location>
        <begin position="109"/>
        <end position="114"/>
    </location>
</feature>
<feature type="helix" evidence="12">
    <location>
        <begin position="116"/>
        <end position="118"/>
    </location>
</feature>
<feature type="helix" evidence="12">
    <location>
        <begin position="121"/>
        <end position="134"/>
    </location>
</feature>
<feature type="turn" evidence="12">
    <location>
        <begin position="135"/>
        <end position="137"/>
    </location>
</feature>
<feature type="strand" evidence="12">
    <location>
        <begin position="138"/>
        <end position="145"/>
    </location>
</feature>
<feature type="helix" evidence="12">
    <location>
        <begin position="147"/>
        <end position="149"/>
    </location>
</feature>
<feature type="helix" evidence="12">
    <location>
        <begin position="152"/>
        <end position="155"/>
    </location>
</feature>
<feature type="strand" evidence="12">
    <location>
        <begin position="158"/>
        <end position="162"/>
    </location>
</feature>
<feature type="helix" evidence="12">
    <location>
        <begin position="168"/>
        <end position="182"/>
    </location>
</feature>
<feature type="helix" evidence="12">
    <location>
        <begin position="188"/>
        <end position="198"/>
    </location>
</feature>
<feature type="helix" evidence="12">
    <location>
        <begin position="202"/>
        <end position="216"/>
    </location>
</feature>
<feature type="strand" evidence="12">
    <location>
        <begin position="217"/>
        <end position="219"/>
    </location>
</feature>
<feature type="helix" evidence="12">
    <location>
        <begin position="221"/>
        <end position="227"/>
    </location>
</feature>
<feature type="helix" evidence="12">
    <location>
        <begin position="232"/>
        <end position="241"/>
    </location>
</feature>
<feature type="helix" evidence="12">
    <location>
        <begin position="245"/>
        <end position="255"/>
    </location>
</feature>
<feature type="helix" evidence="12">
    <location>
        <begin position="257"/>
        <end position="259"/>
    </location>
</feature>
<feature type="helix" evidence="12">
    <location>
        <begin position="263"/>
        <end position="275"/>
    </location>
</feature>
<feature type="strand" evidence="12">
    <location>
        <begin position="278"/>
        <end position="280"/>
    </location>
</feature>
<feature type="helix" evidence="12">
    <location>
        <begin position="282"/>
        <end position="300"/>
    </location>
</feature>
<feature type="turn" evidence="13">
    <location>
        <begin position="301"/>
        <end position="303"/>
    </location>
</feature>
<feature type="helix" evidence="12">
    <location>
        <begin position="306"/>
        <end position="320"/>
    </location>
</feature>
<accession>P40339</accession>
<accession>D6W1X4</accession>
<dbReference type="EMBL" id="L20502">
    <property type="protein sequence ID" value="AAA34970.1"/>
    <property type="molecule type" value="Genomic_DNA"/>
</dbReference>
<dbReference type="EMBL" id="U26030">
    <property type="protein sequence ID" value="AAC49063.1"/>
    <property type="molecule type" value="Genomic_DNA"/>
</dbReference>
<dbReference type="EMBL" id="X83121">
    <property type="protein sequence ID" value="CAA58185.1"/>
    <property type="molecule type" value="Genomic_DNA"/>
</dbReference>
<dbReference type="EMBL" id="Z74836">
    <property type="protein sequence ID" value="CAA99106.1"/>
    <property type="molecule type" value="Genomic_DNA"/>
</dbReference>
<dbReference type="EMBL" id="BK006948">
    <property type="protein sequence ID" value="DAA10690.1"/>
    <property type="molecule type" value="Genomic_DNA"/>
</dbReference>
<dbReference type="PIR" id="A53845">
    <property type="entry name" value="A53845"/>
</dbReference>
<dbReference type="RefSeq" id="NP_014547.1">
    <property type="nucleotide sequence ID" value="NM_001183348.1"/>
</dbReference>
<dbReference type="PDB" id="1SXJ">
    <property type="method" value="X-ray"/>
    <property type="resolution" value="2.85 A"/>
    <property type="chains" value="B=1-323"/>
</dbReference>
<dbReference type="PDB" id="7SGZ">
    <property type="method" value="EM"/>
    <property type="resolution" value="3.17 A"/>
    <property type="chains" value="B=1-323"/>
</dbReference>
<dbReference type="PDB" id="7SH2">
    <property type="method" value="EM"/>
    <property type="resolution" value="3.23 A"/>
    <property type="chains" value="B=1-323"/>
</dbReference>
<dbReference type="PDB" id="7ST9">
    <property type="method" value="EM"/>
    <property type="resolution" value="2.20 A"/>
    <property type="chains" value="B=1-323"/>
</dbReference>
<dbReference type="PDB" id="7STB">
    <property type="method" value="EM"/>
    <property type="resolution" value="2.72 A"/>
    <property type="chains" value="B=1-323"/>
</dbReference>
<dbReference type="PDB" id="7STE">
    <property type="method" value="EM"/>
    <property type="resolution" value="2.73 A"/>
    <property type="chains" value="B=1-323"/>
</dbReference>
<dbReference type="PDB" id="7TFH">
    <property type="method" value="EM"/>
    <property type="resolution" value="3.09 A"/>
    <property type="chains" value="B=1-323"/>
</dbReference>
<dbReference type="PDB" id="7TFI">
    <property type="method" value="EM"/>
    <property type="resolution" value="3.41 A"/>
    <property type="chains" value="B=1-323"/>
</dbReference>
<dbReference type="PDB" id="7TFJ">
    <property type="method" value="EM"/>
    <property type="resolution" value="3.30 A"/>
    <property type="chains" value="B=1-323"/>
</dbReference>
<dbReference type="PDB" id="7TFK">
    <property type="method" value="EM"/>
    <property type="resolution" value="3.25 A"/>
    <property type="chains" value="B=1-323"/>
</dbReference>
<dbReference type="PDB" id="7TFL">
    <property type="method" value="EM"/>
    <property type="resolution" value="3.33 A"/>
    <property type="chains" value="B=1-323"/>
</dbReference>
<dbReference type="PDB" id="7THJ">
    <property type="method" value="EM"/>
    <property type="resolution" value="3.80 A"/>
    <property type="chains" value="B=1-323"/>
</dbReference>
<dbReference type="PDB" id="7THV">
    <property type="method" value="EM"/>
    <property type="resolution" value="4.00 A"/>
    <property type="chains" value="B=1-323"/>
</dbReference>
<dbReference type="PDB" id="7TI8">
    <property type="method" value="EM"/>
    <property type="resolution" value="3.50 A"/>
    <property type="chains" value="B=1-323"/>
</dbReference>
<dbReference type="PDB" id="7TIB">
    <property type="method" value="EM"/>
    <property type="resolution" value="3.40 A"/>
    <property type="chains" value="B=1-323"/>
</dbReference>
<dbReference type="PDB" id="7TIC">
    <property type="method" value="EM"/>
    <property type="resolution" value="3.90 A"/>
    <property type="chains" value="B=1-323"/>
</dbReference>
<dbReference type="PDB" id="7TID">
    <property type="method" value="EM"/>
    <property type="resolution" value="3.30 A"/>
    <property type="chains" value="B=1-323"/>
</dbReference>
<dbReference type="PDB" id="7TKU">
    <property type="method" value="EM"/>
    <property type="resolution" value="4.00 A"/>
    <property type="chains" value="B=1-323"/>
</dbReference>
<dbReference type="PDB" id="7U19">
    <property type="method" value="EM"/>
    <property type="resolution" value="3.70 A"/>
    <property type="chains" value="B=1-323"/>
</dbReference>
<dbReference type="PDB" id="7U1A">
    <property type="method" value="EM"/>
    <property type="resolution" value="3.30 A"/>
    <property type="chains" value="B=1-323"/>
</dbReference>
<dbReference type="PDB" id="7U1P">
    <property type="method" value="EM"/>
    <property type="resolution" value="3.00 A"/>
    <property type="chains" value="B=1-323"/>
</dbReference>
<dbReference type="PDB" id="8DQW">
    <property type="method" value="EM"/>
    <property type="resolution" value="2.10 A"/>
    <property type="chains" value="B=1-323"/>
</dbReference>
<dbReference type="PDB" id="8DQX">
    <property type="method" value="EM"/>
    <property type="resolution" value="2.10 A"/>
    <property type="chains" value="B=1-323"/>
</dbReference>
<dbReference type="PDB" id="8DQZ">
    <property type="method" value="EM"/>
    <property type="resolution" value="2.92 A"/>
    <property type="chains" value="B=1-323"/>
</dbReference>
<dbReference type="PDB" id="8DR0">
    <property type="method" value="EM"/>
    <property type="resolution" value="2.42 A"/>
    <property type="chains" value="B=1-323"/>
</dbReference>
<dbReference type="PDB" id="8DR1">
    <property type="method" value="EM"/>
    <property type="resolution" value="2.14 A"/>
    <property type="chains" value="B=1-323"/>
</dbReference>
<dbReference type="PDB" id="8DR3">
    <property type="method" value="EM"/>
    <property type="resolution" value="2.20 A"/>
    <property type="chains" value="B=1-323"/>
</dbReference>
<dbReference type="PDB" id="8DR4">
    <property type="method" value="EM"/>
    <property type="resolution" value="2.45 A"/>
    <property type="chains" value="B=1-323"/>
</dbReference>
<dbReference type="PDB" id="8DR5">
    <property type="method" value="EM"/>
    <property type="resolution" value="2.76 A"/>
    <property type="chains" value="B=1-323"/>
</dbReference>
<dbReference type="PDB" id="8DR6">
    <property type="method" value="EM"/>
    <property type="resolution" value="2.39 A"/>
    <property type="chains" value="B=1-323"/>
</dbReference>
<dbReference type="PDB" id="8DR7">
    <property type="method" value="EM"/>
    <property type="resolution" value="2.70 A"/>
    <property type="chains" value="B=1-323"/>
</dbReference>
<dbReference type="PDB" id="8FS3">
    <property type="method" value="EM"/>
    <property type="resolution" value="2.93 A"/>
    <property type="chains" value="B=1-323"/>
</dbReference>
<dbReference type="PDB" id="8FS4">
    <property type="method" value="EM"/>
    <property type="resolution" value="2.94 A"/>
    <property type="chains" value="B=1-323"/>
</dbReference>
<dbReference type="PDB" id="8FS5">
    <property type="method" value="EM"/>
    <property type="resolution" value="2.76 A"/>
    <property type="chains" value="B=1-323"/>
</dbReference>
<dbReference type="PDB" id="8FS6">
    <property type="method" value="EM"/>
    <property type="resolution" value="2.90 A"/>
    <property type="chains" value="B=1-323"/>
</dbReference>
<dbReference type="PDB" id="8FS7">
    <property type="method" value="EM"/>
    <property type="resolution" value="2.85 A"/>
    <property type="chains" value="B=1-323"/>
</dbReference>
<dbReference type="PDB" id="8FS8">
    <property type="method" value="EM"/>
    <property type="resolution" value="3.04 A"/>
    <property type="chains" value="B=1-323"/>
</dbReference>
<dbReference type="PDB" id="8THB">
    <property type="method" value="EM"/>
    <property type="resolution" value="3.20 A"/>
    <property type="chains" value="B=1-323"/>
</dbReference>
<dbReference type="PDB" id="8THC">
    <property type="method" value="EM"/>
    <property type="resolution" value="3.67 A"/>
    <property type="chains" value="B=1-323"/>
</dbReference>
<dbReference type="PDB" id="8THD">
    <property type="method" value="EM"/>
    <property type="resolution" value="3.25 A"/>
    <property type="chains" value="B=1-323"/>
</dbReference>
<dbReference type="PDB" id="8TW7">
    <property type="method" value="EM"/>
    <property type="resolution" value="3.80 A"/>
    <property type="chains" value="4=8-322"/>
</dbReference>
<dbReference type="PDB" id="8TW8">
    <property type="method" value="EM"/>
    <property type="resolution" value="3.50 A"/>
    <property type="chains" value="4=4-322"/>
</dbReference>
<dbReference type="PDB" id="8TWA">
    <property type="method" value="EM"/>
    <property type="resolution" value="4.10 A"/>
    <property type="chains" value="4=4-322"/>
</dbReference>
<dbReference type="PDB" id="8TWB">
    <property type="method" value="EM"/>
    <property type="resolution" value="3.20 A"/>
    <property type="chains" value="4=4-322"/>
</dbReference>
<dbReference type="PDBsum" id="1SXJ"/>
<dbReference type="PDBsum" id="7SGZ"/>
<dbReference type="PDBsum" id="7SH2"/>
<dbReference type="PDBsum" id="7ST9"/>
<dbReference type="PDBsum" id="7STB"/>
<dbReference type="PDBsum" id="7STE"/>
<dbReference type="PDBsum" id="7TFH"/>
<dbReference type="PDBsum" id="7TFI"/>
<dbReference type="PDBsum" id="7TFJ"/>
<dbReference type="PDBsum" id="7TFK"/>
<dbReference type="PDBsum" id="7TFL"/>
<dbReference type="PDBsum" id="7THJ"/>
<dbReference type="PDBsum" id="7THV"/>
<dbReference type="PDBsum" id="7TI8"/>
<dbReference type="PDBsum" id="7TIB"/>
<dbReference type="PDBsum" id="7TIC"/>
<dbReference type="PDBsum" id="7TID"/>
<dbReference type="PDBsum" id="7TKU"/>
<dbReference type="PDBsum" id="7U19"/>
<dbReference type="PDBsum" id="7U1A"/>
<dbReference type="PDBsum" id="7U1P"/>
<dbReference type="PDBsum" id="8DQW"/>
<dbReference type="PDBsum" id="8DQX"/>
<dbReference type="PDBsum" id="8DQZ"/>
<dbReference type="PDBsum" id="8DR0"/>
<dbReference type="PDBsum" id="8DR1"/>
<dbReference type="PDBsum" id="8DR3"/>
<dbReference type="PDBsum" id="8DR4"/>
<dbReference type="PDBsum" id="8DR5"/>
<dbReference type="PDBsum" id="8DR6"/>
<dbReference type="PDBsum" id="8DR7"/>
<dbReference type="PDBsum" id="8FS3"/>
<dbReference type="PDBsum" id="8FS4"/>
<dbReference type="PDBsum" id="8FS5"/>
<dbReference type="PDBsum" id="8FS6"/>
<dbReference type="PDBsum" id="8FS7"/>
<dbReference type="PDBsum" id="8FS8"/>
<dbReference type="PDBsum" id="8THB"/>
<dbReference type="PDBsum" id="8THC"/>
<dbReference type="PDBsum" id="8THD"/>
<dbReference type="PDBsum" id="8TW7"/>
<dbReference type="PDBsum" id="8TW8"/>
<dbReference type="PDBsum" id="8TWA"/>
<dbReference type="PDBsum" id="8TWB"/>
<dbReference type="EMDB" id="EMD-25121"/>
<dbReference type="EMDB" id="EMD-25122"/>
<dbReference type="EMDB" id="EMD-25422"/>
<dbReference type="EMDB" id="EMD-25423"/>
<dbReference type="EMDB" id="EMD-25426"/>
<dbReference type="EMDB" id="EMD-25568"/>
<dbReference type="EMDB" id="EMD-25569"/>
<dbReference type="EMDB" id="EMD-25614"/>
<dbReference type="EMDB" id="EMD-25615"/>
<dbReference type="EMDB" id="EMD-25616"/>
<dbReference type="EMDB" id="EMD-25617"/>
<dbReference type="EMDB" id="EMD-25753"/>
<dbReference type="EMDB" id="EMD-25872"/>
<dbReference type="EMDB" id="EMD-25873"/>
<dbReference type="EMDB" id="EMD-25874"/>
<dbReference type="EMDB" id="EMD-25875"/>
<dbReference type="EMDB" id="EMD-25876"/>
<dbReference type="EMDB" id="EMD-26297"/>
<dbReference type="EMDB" id="EMD-26298"/>
<dbReference type="EMDB" id="EMD-26302"/>
<dbReference type="EMDB" id="EMD-27662"/>
<dbReference type="EMDB" id="EMD-27663"/>
<dbReference type="EMDB" id="EMD-27666"/>
<dbReference type="EMDB" id="EMD-27667"/>
<dbReference type="EMDB" id="EMD-27668"/>
<dbReference type="EMDB" id="EMD-27669"/>
<dbReference type="EMDB" id="EMD-27670"/>
<dbReference type="EMDB" id="EMD-27671"/>
<dbReference type="EMDB" id="EMD-27672"/>
<dbReference type="EMDB" id="EMD-27673"/>
<dbReference type="EMDB" id="EMD-29412"/>
<dbReference type="EMDB" id="EMD-29413"/>
<dbReference type="EMDB" id="EMD-29414"/>
<dbReference type="EMDB" id="EMD-29415"/>
<dbReference type="EMDB" id="EMD-29416"/>
<dbReference type="EMDB" id="EMD-29417"/>
<dbReference type="EMDB" id="EMD-41252"/>
<dbReference type="EMDB" id="EMD-41253"/>
<dbReference type="EMDB" id="EMD-41254"/>
<dbReference type="EMDB" id="EMD-41661"/>
<dbReference type="EMDB" id="EMD-41662"/>
<dbReference type="EMDB" id="EMD-41664"/>
<dbReference type="EMDB" id="EMD-41665"/>
<dbReference type="SMR" id="P40339"/>
<dbReference type="BioGRID" id="34308">
    <property type="interactions" value="355"/>
</dbReference>
<dbReference type="ComplexPortal" id="CPX-1731">
    <property type="entry name" value="CTF18-RFC complex"/>
</dbReference>
<dbReference type="ComplexPortal" id="CPX-1807">
    <property type="entry name" value="Rad17 RFC-like complex"/>
</dbReference>
<dbReference type="ComplexPortal" id="CPX-422">
    <property type="entry name" value="ELG1-RFC complex"/>
</dbReference>
<dbReference type="ComplexPortal" id="CPX-545">
    <property type="entry name" value="DNA replication factor C complex"/>
</dbReference>
<dbReference type="DIP" id="DIP-2530N"/>
<dbReference type="FunCoup" id="P40339">
    <property type="interactions" value="906"/>
</dbReference>
<dbReference type="IntAct" id="P40339">
    <property type="interactions" value="58"/>
</dbReference>
<dbReference type="MINT" id="P40339"/>
<dbReference type="STRING" id="4932.YOL094C"/>
<dbReference type="iPTMnet" id="P40339"/>
<dbReference type="PaxDb" id="4932-YOL094C"/>
<dbReference type="PeptideAtlas" id="P40339"/>
<dbReference type="EnsemblFungi" id="YOL094C_mRNA">
    <property type="protein sequence ID" value="YOL094C"/>
    <property type="gene ID" value="YOL094C"/>
</dbReference>
<dbReference type="GeneID" id="854059"/>
<dbReference type="KEGG" id="sce:YOL094C"/>
<dbReference type="AGR" id="SGD:S000005454"/>
<dbReference type="SGD" id="S000005454">
    <property type="gene designation" value="RFC4"/>
</dbReference>
<dbReference type="VEuPathDB" id="FungiDB:YOL094C"/>
<dbReference type="eggNOG" id="KOG0991">
    <property type="taxonomic scope" value="Eukaryota"/>
</dbReference>
<dbReference type="GeneTree" id="ENSGT00550000075050"/>
<dbReference type="HOGENOM" id="CLU_042324_0_1_1"/>
<dbReference type="InParanoid" id="P40339"/>
<dbReference type="OMA" id="SCNYSSQ"/>
<dbReference type="OrthoDB" id="4199794at2759"/>
<dbReference type="BioCyc" id="YEAST:G3O-33494-MONOMER"/>
<dbReference type="Reactome" id="R-SCE-110312">
    <property type="pathway name" value="Translesion synthesis by REV1"/>
</dbReference>
<dbReference type="Reactome" id="R-SCE-110320">
    <property type="pathway name" value="Translesion Synthesis by POLH"/>
</dbReference>
<dbReference type="Reactome" id="R-SCE-176187">
    <property type="pathway name" value="Activation of ATR in response to replication stress"/>
</dbReference>
<dbReference type="Reactome" id="R-SCE-5655862">
    <property type="pathway name" value="Translesion synthesis by POLK"/>
</dbReference>
<dbReference type="Reactome" id="R-SCE-5656121">
    <property type="pathway name" value="Translesion synthesis by POLI"/>
</dbReference>
<dbReference type="Reactome" id="R-SCE-5656169">
    <property type="pathway name" value="Termination of translesion DNA synthesis"/>
</dbReference>
<dbReference type="Reactome" id="R-SCE-5696397">
    <property type="pathway name" value="Gap-filling DNA repair synthesis and ligation in GG-NER"/>
</dbReference>
<dbReference type="Reactome" id="R-SCE-6782135">
    <property type="pathway name" value="Dual incision in TC-NER"/>
</dbReference>
<dbReference type="Reactome" id="R-SCE-6782210">
    <property type="pathway name" value="Gap-filling DNA repair synthesis and ligation in TC-NER"/>
</dbReference>
<dbReference type="Reactome" id="R-SCE-69091">
    <property type="pathway name" value="Polymerase switching"/>
</dbReference>
<dbReference type="BioGRID-ORCS" id="854059">
    <property type="hits" value="0 hits in 10 CRISPR screens"/>
</dbReference>
<dbReference type="EvolutionaryTrace" id="P40339"/>
<dbReference type="PRO" id="PR:P40339"/>
<dbReference type="Proteomes" id="UP000002311">
    <property type="component" value="Chromosome XV"/>
</dbReference>
<dbReference type="RNAct" id="P40339">
    <property type="molecule type" value="protein"/>
</dbReference>
<dbReference type="GO" id="GO:0031390">
    <property type="term" value="C:Ctf18 RFC-like complex"/>
    <property type="evidence" value="ECO:0000353"/>
    <property type="project" value="ComplexPortal"/>
</dbReference>
<dbReference type="GO" id="GO:0005829">
    <property type="term" value="C:cytosol"/>
    <property type="evidence" value="ECO:0000314"/>
    <property type="project" value="SGD"/>
</dbReference>
<dbReference type="GO" id="GO:0005663">
    <property type="term" value="C:DNA replication factor C complex"/>
    <property type="evidence" value="ECO:0000314"/>
    <property type="project" value="SGD"/>
</dbReference>
<dbReference type="GO" id="GO:0031391">
    <property type="term" value="C:Elg1 RFC-like complex"/>
    <property type="evidence" value="ECO:0000353"/>
    <property type="project" value="SGD"/>
</dbReference>
<dbReference type="GO" id="GO:0005634">
    <property type="term" value="C:nucleus"/>
    <property type="evidence" value="ECO:0000314"/>
    <property type="project" value="SGD"/>
</dbReference>
<dbReference type="GO" id="GO:0031389">
    <property type="term" value="C:Rad17 RFC-like complex"/>
    <property type="evidence" value="ECO:0000314"/>
    <property type="project" value="SGD"/>
</dbReference>
<dbReference type="GO" id="GO:0005524">
    <property type="term" value="F:ATP binding"/>
    <property type="evidence" value="ECO:0007669"/>
    <property type="project" value="UniProtKB-KW"/>
</dbReference>
<dbReference type="GO" id="GO:0016887">
    <property type="term" value="F:ATP hydrolysis activity"/>
    <property type="evidence" value="ECO:0007669"/>
    <property type="project" value="InterPro"/>
</dbReference>
<dbReference type="GO" id="GO:0003677">
    <property type="term" value="F:DNA binding"/>
    <property type="evidence" value="ECO:0007669"/>
    <property type="project" value="UniProtKB-KW"/>
</dbReference>
<dbReference type="GO" id="GO:0000077">
    <property type="term" value="P:DNA damage checkpoint signaling"/>
    <property type="evidence" value="ECO:0000303"/>
    <property type="project" value="ComplexPortal"/>
</dbReference>
<dbReference type="GO" id="GO:0006281">
    <property type="term" value="P:DNA repair"/>
    <property type="evidence" value="ECO:0000318"/>
    <property type="project" value="GO_Central"/>
</dbReference>
<dbReference type="GO" id="GO:0006261">
    <property type="term" value="P:DNA-templated DNA replication"/>
    <property type="evidence" value="ECO:0000314"/>
    <property type="project" value="ComplexPortal"/>
</dbReference>
<dbReference type="GO" id="GO:0006272">
    <property type="term" value="P:leading strand elongation"/>
    <property type="evidence" value="ECO:0000314"/>
    <property type="project" value="SGD"/>
</dbReference>
<dbReference type="GO" id="GO:0007064">
    <property type="term" value="P:mitotic sister chromatid cohesion"/>
    <property type="evidence" value="ECO:0000303"/>
    <property type="project" value="ComplexPortal"/>
</dbReference>
<dbReference type="GO" id="GO:0007062">
    <property type="term" value="P:sister chromatid cohesion"/>
    <property type="evidence" value="ECO:0000314"/>
    <property type="project" value="SGD"/>
</dbReference>
<dbReference type="CDD" id="cd00009">
    <property type="entry name" value="AAA"/>
    <property type="match status" value="1"/>
</dbReference>
<dbReference type="CDD" id="cd18140">
    <property type="entry name" value="HLD_clamp_RFC"/>
    <property type="match status" value="1"/>
</dbReference>
<dbReference type="FunFam" id="1.10.8.60:FF:000012">
    <property type="entry name" value="Replication factor C subunit 4"/>
    <property type="match status" value="1"/>
</dbReference>
<dbReference type="FunFam" id="1.20.272.10:FF:000015">
    <property type="entry name" value="Replication factor C subunit 4"/>
    <property type="match status" value="1"/>
</dbReference>
<dbReference type="FunFam" id="3.40.50.300:FF:000107">
    <property type="entry name" value="Replication factor C subunit 4"/>
    <property type="match status" value="1"/>
</dbReference>
<dbReference type="Gene3D" id="1.10.8.60">
    <property type="match status" value="1"/>
</dbReference>
<dbReference type="Gene3D" id="1.20.272.10">
    <property type="match status" value="1"/>
</dbReference>
<dbReference type="Gene3D" id="3.40.50.300">
    <property type="entry name" value="P-loop containing nucleotide triphosphate hydrolases"/>
    <property type="match status" value="1"/>
</dbReference>
<dbReference type="InterPro" id="IPR003593">
    <property type="entry name" value="AAA+_ATPase"/>
</dbReference>
<dbReference type="InterPro" id="IPR003959">
    <property type="entry name" value="ATPase_AAA_core"/>
</dbReference>
<dbReference type="InterPro" id="IPR008921">
    <property type="entry name" value="DNA_pol3_clamp-load_cplx_C"/>
</dbReference>
<dbReference type="InterPro" id="IPR050238">
    <property type="entry name" value="DNA_Rep/Repair_Clamp_Loader"/>
</dbReference>
<dbReference type="InterPro" id="IPR027417">
    <property type="entry name" value="P-loop_NTPase"/>
</dbReference>
<dbReference type="InterPro" id="IPR013748">
    <property type="entry name" value="Rep_factorC_C"/>
</dbReference>
<dbReference type="InterPro" id="IPR047854">
    <property type="entry name" value="RFC_lid"/>
</dbReference>
<dbReference type="NCBIfam" id="NF001679">
    <property type="entry name" value="PRK00440.1"/>
    <property type="match status" value="1"/>
</dbReference>
<dbReference type="PANTHER" id="PTHR11669">
    <property type="entry name" value="REPLICATION FACTOR C / DNA POLYMERASE III GAMMA-TAU SUBUNIT"/>
    <property type="match status" value="1"/>
</dbReference>
<dbReference type="PANTHER" id="PTHR11669:SF5">
    <property type="entry name" value="REPLICATION FACTOR C SUBUNIT 2"/>
    <property type="match status" value="1"/>
</dbReference>
<dbReference type="Pfam" id="PF00004">
    <property type="entry name" value="AAA"/>
    <property type="match status" value="1"/>
</dbReference>
<dbReference type="Pfam" id="PF08542">
    <property type="entry name" value="Rep_fac_C"/>
    <property type="match status" value="1"/>
</dbReference>
<dbReference type="SMART" id="SM00382">
    <property type="entry name" value="AAA"/>
    <property type="match status" value="1"/>
</dbReference>
<dbReference type="SUPFAM" id="SSF52540">
    <property type="entry name" value="P-loop containing nucleoside triphosphate hydrolases"/>
    <property type="match status" value="1"/>
</dbReference>
<dbReference type="SUPFAM" id="SSF48019">
    <property type="entry name" value="post-AAA+ oligomerization domain-like"/>
    <property type="match status" value="1"/>
</dbReference>